<feature type="chain" id="PRO_0000401374" description="5'-methylthioadenosine/S-adenosylhomocysteine nucleosidase">
    <location>
        <begin position="1"/>
        <end position="254"/>
    </location>
</feature>
<feature type="active site" description="Proton acceptor" evidence="1">
    <location>
        <position position="25"/>
    </location>
</feature>
<feature type="active site" description="Proton donor" evidence="1">
    <location>
        <position position="212"/>
    </location>
</feature>
<feature type="binding site" evidence="1">
    <location>
        <position position="103"/>
    </location>
    <ligand>
        <name>S-methyl-5'-thioadenosine</name>
        <dbReference type="ChEBI" id="CHEBI:17509"/>
    </ligand>
</feature>
<feature type="binding site" evidence="1">
    <location>
        <begin position="186"/>
        <end position="189"/>
    </location>
    <ligand>
        <name>S-methyl-5'-thioadenosine</name>
        <dbReference type="ChEBI" id="CHEBI:17509"/>
    </ligand>
</feature>
<feature type="binding site" evidence="4">
    <location>
        <position position="186"/>
    </location>
    <ligand>
        <name>adenine</name>
        <dbReference type="ChEBI" id="CHEBI:16708"/>
    </ligand>
</feature>
<feature type="binding site" evidence="4">
    <location>
        <position position="212"/>
    </location>
    <ligand>
        <name>adenine</name>
        <dbReference type="ChEBI" id="CHEBI:16708"/>
    </ligand>
</feature>
<feature type="modified residue" description="N-acetylmethionine" evidence="12">
    <location>
        <position position="1"/>
    </location>
</feature>
<feature type="strand" evidence="13">
    <location>
        <begin position="15"/>
        <end position="19"/>
    </location>
</feature>
<feature type="helix" evidence="13">
    <location>
        <begin position="23"/>
        <end position="33"/>
    </location>
</feature>
<feature type="strand" evidence="13">
    <location>
        <begin position="36"/>
        <end position="40"/>
    </location>
</feature>
<feature type="strand" evidence="13">
    <location>
        <begin position="50"/>
        <end position="56"/>
    </location>
</feature>
<feature type="strand" evidence="13">
    <location>
        <begin position="59"/>
        <end position="65"/>
    </location>
</feature>
<feature type="turn" evidence="13">
    <location>
        <begin position="70"/>
        <end position="72"/>
    </location>
</feature>
<feature type="helix" evidence="13">
    <location>
        <begin position="79"/>
        <end position="91"/>
    </location>
</feature>
<feature type="strand" evidence="13">
    <location>
        <begin position="96"/>
        <end position="106"/>
    </location>
</feature>
<feature type="helix" evidence="13">
    <location>
        <begin position="108"/>
        <end position="110"/>
    </location>
</feature>
<feature type="strand" evidence="13">
    <location>
        <begin position="117"/>
        <end position="127"/>
    </location>
</feature>
<feature type="helix" evidence="13">
    <location>
        <begin position="135"/>
        <end position="140"/>
    </location>
</feature>
<feature type="helix" evidence="13">
    <location>
        <begin position="149"/>
        <end position="154"/>
    </location>
</feature>
<feature type="strand" evidence="13">
    <location>
        <begin position="158"/>
        <end position="164"/>
    </location>
</feature>
<feature type="helix" evidence="13">
    <location>
        <begin position="172"/>
        <end position="180"/>
    </location>
</feature>
<feature type="strand" evidence="13">
    <location>
        <begin position="184"/>
        <end position="189"/>
    </location>
</feature>
<feature type="helix" evidence="13">
    <location>
        <begin position="190"/>
        <end position="199"/>
    </location>
</feature>
<feature type="strand" evidence="13">
    <location>
        <begin position="204"/>
        <end position="213"/>
    </location>
</feature>
<feature type="turn" evidence="13">
    <location>
        <begin position="214"/>
        <end position="217"/>
    </location>
</feature>
<feature type="turn" evidence="13">
    <location>
        <begin position="221"/>
        <end position="225"/>
    </location>
</feature>
<feature type="helix" evidence="13">
    <location>
        <begin position="227"/>
        <end position="246"/>
    </location>
</feature>
<feature type="turn" evidence="13">
    <location>
        <begin position="251"/>
        <end position="253"/>
    </location>
</feature>
<organism>
    <name type="scientific">Arabidopsis thaliana</name>
    <name type="common">Mouse-ear cress</name>
    <dbReference type="NCBI Taxonomy" id="3702"/>
    <lineage>
        <taxon>Eukaryota</taxon>
        <taxon>Viridiplantae</taxon>
        <taxon>Streptophyta</taxon>
        <taxon>Embryophyta</taxon>
        <taxon>Tracheophyta</taxon>
        <taxon>Spermatophyta</taxon>
        <taxon>Magnoliopsida</taxon>
        <taxon>eudicotyledons</taxon>
        <taxon>Gunneridae</taxon>
        <taxon>Pentapetalae</taxon>
        <taxon>rosids</taxon>
        <taxon>malvids</taxon>
        <taxon>Brassicales</taxon>
        <taxon>Brassicaceae</taxon>
        <taxon>Camelineae</taxon>
        <taxon>Arabidopsis</taxon>
    </lineage>
</organism>
<keyword id="KW-0002">3D-structure</keyword>
<keyword id="KW-0007">Acetylation</keyword>
<keyword id="KW-0028">Amino-acid biosynthesis</keyword>
<keyword id="KW-0378">Hydrolase</keyword>
<keyword id="KW-0486">Methionine biosynthesis</keyword>
<keyword id="KW-1185">Reference proteome</keyword>
<sequence>MEGVMGQVEKRPISTIVFIVAMQKEAQPLINRLRLVEEVNTPFPKEVTWIMFKGMYKDLNINIVCPGKDSTLGVESVGTVPASLVTYASILAIQPDLIINAGTAGGFKAKGACISDVYVVSTVAFHDRRIPVPVLDIYGVGMRNTFPTPNLIKELNLKVGRLSTGDSMDMSPHDEESITANDATVKDMEGAAVAYVADIFKVPTILIKGVTDIVDGNRPTSEEFLENLAAVTAKLDESLTKVIDFISGKCLSDL</sequence>
<evidence type="ECO:0000250" key="1">
    <source>
        <dbReference type="UniProtKB" id="Q9T0I8"/>
    </source>
</evidence>
<evidence type="ECO:0000269" key="2">
    <source>
    </source>
</evidence>
<evidence type="ECO:0000269" key="3">
    <source>
    </source>
</evidence>
<evidence type="ECO:0000269" key="4">
    <source>
    </source>
</evidence>
<evidence type="ECO:0000269" key="5">
    <source>
    </source>
</evidence>
<evidence type="ECO:0000269" key="6">
    <source>
    </source>
</evidence>
<evidence type="ECO:0000303" key="7">
    <source>
    </source>
</evidence>
<evidence type="ECO:0000305" key="8"/>
<evidence type="ECO:0000305" key="9">
    <source>
    </source>
</evidence>
<evidence type="ECO:0000305" key="10">
    <source>
    </source>
</evidence>
<evidence type="ECO:0007744" key="11">
    <source>
        <dbReference type="PDB" id="3BSF"/>
    </source>
</evidence>
<evidence type="ECO:0007744" key="12">
    <source>
    </source>
</evidence>
<evidence type="ECO:0007829" key="13">
    <source>
        <dbReference type="PDB" id="3BSF"/>
    </source>
</evidence>
<proteinExistence type="evidence at protein level"/>
<comment type="function">
    <text evidence="2 3 4 5 6">Enzyme of the methionine cycle that catalyzes the irreversible cleavage of the glycosidic bond in 5'-methylthioadenosine (MTA) and S-adenosylhomocysteine (SAH/AdoHcy) to a lesser extent, to adenine and the corresponding thioribose, 5'-methylthioribose and S-ribosylhomocysteine, respectively (PubMed:18342331, PubMed:19249293). Contributes to the maintenance of AdoMet homeostasis and is required to sustain high rates of ethylene synthesis.</text>
</comment>
<comment type="catalytic activity">
    <reaction evidence="3 4">
        <text>S-methyl-5'-thioadenosine + H2O = 5-(methylsulfanyl)-D-ribose + adenine</text>
        <dbReference type="Rhea" id="RHEA:13617"/>
        <dbReference type="ChEBI" id="CHEBI:15377"/>
        <dbReference type="ChEBI" id="CHEBI:16708"/>
        <dbReference type="ChEBI" id="CHEBI:17509"/>
        <dbReference type="ChEBI" id="CHEBI:78440"/>
        <dbReference type="EC" id="3.2.2.9"/>
    </reaction>
    <physiologicalReaction direction="left-to-right" evidence="9 10">
        <dbReference type="Rhea" id="RHEA:13618"/>
    </physiologicalReaction>
</comment>
<comment type="catalytic activity">
    <reaction evidence="3 4">
        <text>S-adenosyl-L-homocysteine + H2O = S-(5-deoxy-D-ribos-5-yl)-L-homocysteine + adenine</text>
        <dbReference type="Rhea" id="RHEA:17805"/>
        <dbReference type="ChEBI" id="CHEBI:15377"/>
        <dbReference type="ChEBI" id="CHEBI:16708"/>
        <dbReference type="ChEBI" id="CHEBI:57856"/>
        <dbReference type="ChEBI" id="CHEBI:58195"/>
        <dbReference type="EC" id="3.2.2.9"/>
    </reaction>
    <physiologicalReaction direction="left-to-right" evidence="9 10">
        <dbReference type="Rhea" id="RHEA:17806"/>
    </physiologicalReaction>
</comment>
<comment type="catalytic activity">
    <reaction evidence="3 4">
        <text>5'-deoxyadenosine + H2O = 5-deoxy-D-ribose + adenine</text>
        <dbReference type="Rhea" id="RHEA:29859"/>
        <dbReference type="ChEBI" id="CHEBI:15377"/>
        <dbReference type="ChEBI" id="CHEBI:16708"/>
        <dbReference type="ChEBI" id="CHEBI:17319"/>
        <dbReference type="ChEBI" id="CHEBI:149540"/>
        <dbReference type="EC" id="3.2.2.9"/>
    </reaction>
    <physiologicalReaction direction="left-to-right" evidence="9 10">
        <dbReference type="Rhea" id="RHEA:29860"/>
    </physiologicalReaction>
</comment>
<comment type="biophysicochemical properties">
    <kinetics>
        <KM evidence="3">3.4 uM for 5'-methylthioadenosine (MTA)</KM>
        <KM evidence="4">33.4 uM for 5'-methylthioadenosine (MTA)</KM>
        <KM evidence="4">200.9 uM for S-adenosyl-L-homocysteine (SAH)</KM>
        <text evidence="3">kcat is 2.0 sec(-1) with MTA as substrate.</text>
    </kinetics>
    <phDependence>
        <text evidence="3">Optimum pH is 6.0.</text>
    </phDependence>
</comment>
<comment type="pathway">
    <text>Amino-acid biosynthesis; L-methionine biosynthesis via salvage pathway; S-methyl-5-thio-alpha-D-ribose 1-phosphate from S-methyl-5'-thioadenosine (hydrolase route): step 1/2.</text>
</comment>
<comment type="subunit">
    <text evidence="4">Homodimer.</text>
</comment>
<comment type="disruption phenotype">
    <text evidence="5">No visible phenotype.</text>
</comment>
<comment type="similarity">
    <text evidence="8">Belongs to the PNP/UDP phosphorylase family. MtnN subfamily.</text>
</comment>
<comment type="sequence caution" evidence="8">
    <conflict type="erroneous gene model prediction">
        <sequence resource="EMBL-CDS" id="CAB45445"/>
    </conflict>
</comment>
<comment type="sequence caution" evidence="8">
    <conflict type="erroneous gene model prediction">
        <sequence resource="EMBL-CDS" id="CAB80201"/>
    </conflict>
</comment>
<name>MTN2_ARATH</name>
<accession>Q7XA67</accession>
<accession>Q9SW50</accession>
<gene>
    <name type="primary">MTN2</name>
    <name type="synonym">MTAN2</name>
    <name type="ordered locus">At4g34840</name>
    <name type="ORF">T11I11.80</name>
</gene>
<protein>
    <recommendedName>
        <fullName>5'-methylthioadenosine/S-adenosylhomocysteine nucleosidase</fullName>
        <shortName>MTA/SAH nucleosidase</shortName>
        <ecNumber evidence="3 4">3.2.2.9</ecNumber>
    </recommendedName>
    <alternativeName>
        <fullName>5'-methylthioadenosine nucleosidase 2</fullName>
        <shortName evidence="7">AtMTAN2</shortName>
        <shortName>MTA nucleosidase 2</shortName>
    </alternativeName>
    <alternativeName>
        <fullName>S-adenosylhomocysteine nucleosidase</fullName>
        <shortName>AdoHcy nucleosidase</shortName>
        <shortName>SAH nucleosidase</shortName>
        <shortName>SRH nucleosidase</shortName>
    </alternativeName>
</protein>
<dbReference type="EC" id="3.2.2.9" evidence="3 4"/>
<dbReference type="EMBL" id="AL079347">
    <property type="protein sequence ID" value="CAB45445.1"/>
    <property type="status" value="ALT_SEQ"/>
    <property type="molecule type" value="Genomic_DNA"/>
</dbReference>
<dbReference type="EMBL" id="AL161586">
    <property type="protein sequence ID" value="CAB80201.1"/>
    <property type="status" value="ALT_SEQ"/>
    <property type="molecule type" value="Genomic_DNA"/>
</dbReference>
<dbReference type="EMBL" id="CP002687">
    <property type="protein sequence ID" value="AEE86427.1"/>
    <property type="molecule type" value="Genomic_DNA"/>
</dbReference>
<dbReference type="EMBL" id="BT010195">
    <property type="protein sequence ID" value="AAQ22664.1"/>
    <property type="molecule type" value="mRNA"/>
</dbReference>
<dbReference type="EMBL" id="AK229730">
    <property type="protein sequence ID" value="BAF01568.1"/>
    <property type="molecule type" value="mRNA"/>
</dbReference>
<dbReference type="PIR" id="T10230">
    <property type="entry name" value="T10230"/>
</dbReference>
<dbReference type="RefSeq" id="NP_195210.2">
    <property type="nucleotide sequence ID" value="NM_119650.4"/>
</dbReference>
<dbReference type="PDB" id="3BSF">
    <property type="method" value="X-ray"/>
    <property type="resolution" value="2.90 A"/>
    <property type="chains" value="A/B=1-254"/>
</dbReference>
<dbReference type="PDBsum" id="3BSF"/>
<dbReference type="SMR" id="Q7XA67"/>
<dbReference type="BioGRID" id="14918">
    <property type="interactions" value="2"/>
</dbReference>
<dbReference type="FunCoup" id="Q7XA67">
    <property type="interactions" value="134"/>
</dbReference>
<dbReference type="STRING" id="3702.Q7XA67"/>
<dbReference type="iPTMnet" id="Q7XA67"/>
<dbReference type="PaxDb" id="3702-AT4G34840.1"/>
<dbReference type="DNASU" id="829636"/>
<dbReference type="EnsemblPlants" id="AT4G34840.1">
    <property type="protein sequence ID" value="AT4G34840.1"/>
    <property type="gene ID" value="AT4G34840"/>
</dbReference>
<dbReference type="GeneID" id="829636"/>
<dbReference type="Gramene" id="AT4G34840.1">
    <property type="protein sequence ID" value="AT4G34840.1"/>
    <property type="gene ID" value="AT4G34840"/>
</dbReference>
<dbReference type="KEGG" id="ath:AT4G34840"/>
<dbReference type="Araport" id="AT4G34840"/>
<dbReference type="TAIR" id="AT4G34840">
    <property type="gene designation" value="MTN2"/>
</dbReference>
<dbReference type="eggNOG" id="ENOG502QTZK">
    <property type="taxonomic scope" value="Eukaryota"/>
</dbReference>
<dbReference type="HOGENOM" id="CLU_067435_0_0_1"/>
<dbReference type="InParanoid" id="Q7XA67"/>
<dbReference type="OrthoDB" id="1153057at2759"/>
<dbReference type="PhylomeDB" id="Q7XA67"/>
<dbReference type="BioCyc" id="ARA:AT4G34840-MONOMER"/>
<dbReference type="BRENDA" id="2.4.2.28">
    <property type="organism ID" value="399"/>
</dbReference>
<dbReference type="BRENDA" id="3.2.2.9">
    <property type="organism ID" value="399"/>
</dbReference>
<dbReference type="UniPathway" id="UPA00904">
    <property type="reaction ID" value="UER00871"/>
</dbReference>
<dbReference type="EvolutionaryTrace" id="Q7XA67"/>
<dbReference type="PRO" id="PR:Q7XA67"/>
<dbReference type="Proteomes" id="UP000006548">
    <property type="component" value="Chromosome 4"/>
</dbReference>
<dbReference type="ExpressionAtlas" id="Q7XA67">
    <property type="expression patterns" value="baseline and differential"/>
</dbReference>
<dbReference type="GO" id="GO:0008782">
    <property type="term" value="F:adenosylhomocysteine nucleosidase activity"/>
    <property type="evidence" value="ECO:0007669"/>
    <property type="project" value="UniProtKB-EC"/>
</dbReference>
<dbReference type="GO" id="GO:0008930">
    <property type="term" value="F:methylthioadenosine nucleosidase activity"/>
    <property type="evidence" value="ECO:0000314"/>
    <property type="project" value="TAIR"/>
</dbReference>
<dbReference type="GO" id="GO:0019509">
    <property type="term" value="P:L-methionine salvage from methylthioadenosine"/>
    <property type="evidence" value="ECO:0000314"/>
    <property type="project" value="TAIR"/>
</dbReference>
<dbReference type="GO" id="GO:0009116">
    <property type="term" value="P:nucleoside metabolic process"/>
    <property type="evidence" value="ECO:0007669"/>
    <property type="project" value="InterPro"/>
</dbReference>
<dbReference type="GO" id="GO:0010087">
    <property type="term" value="P:phloem or xylem histogenesis"/>
    <property type="evidence" value="ECO:0000316"/>
    <property type="project" value="TAIR"/>
</dbReference>
<dbReference type="CDD" id="cd09008">
    <property type="entry name" value="MTAN"/>
    <property type="match status" value="1"/>
</dbReference>
<dbReference type="Gene3D" id="3.40.50.1580">
    <property type="entry name" value="Nucleoside phosphorylase domain"/>
    <property type="match status" value="1"/>
</dbReference>
<dbReference type="InterPro" id="IPR044580">
    <property type="entry name" value="MTAN"/>
</dbReference>
<dbReference type="InterPro" id="IPR000845">
    <property type="entry name" value="Nucleoside_phosphorylase_d"/>
</dbReference>
<dbReference type="InterPro" id="IPR035994">
    <property type="entry name" value="Nucleoside_phosphorylase_sf"/>
</dbReference>
<dbReference type="PANTHER" id="PTHR46994">
    <property type="entry name" value="5'-METHYLTHIOADENOSINE/S-ADENOSYLHOMOCYSTEINE NUCLEOSIDASE 1"/>
    <property type="match status" value="1"/>
</dbReference>
<dbReference type="PANTHER" id="PTHR46994:SF2">
    <property type="entry name" value="5'-METHYLTHIOADENOSINE_S-ADENOSYLHOMOCYSTEINE NUCLEOSIDASE"/>
    <property type="match status" value="1"/>
</dbReference>
<dbReference type="Pfam" id="PF01048">
    <property type="entry name" value="PNP_UDP_1"/>
    <property type="match status" value="1"/>
</dbReference>
<dbReference type="SUPFAM" id="SSF53167">
    <property type="entry name" value="Purine and uridine phosphorylases"/>
    <property type="match status" value="1"/>
</dbReference>
<reference key="1">
    <citation type="journal article" date="1999" name="Nature">
        <title>Sequence and analysis of chromosome 4 of the plant Arabidopsis thaliana.</title>
        <authorList>
            <person name="Mayer K.F.X."/>
            <person name="Schueller C."/>
            <person name="Wambutt R."/>
            <person name="Murphy G."/>
            <person name="Volckaert G."/>
            <person name="Pohl T."/>
            <person name="Duesterhoeft A."/>
            <person name="Stiekema W."/>
            <person name="Entian K.-D."/>
            <person name="Terryn N."/>
            <person name="Harris B."/>
            <person name="Ansorge W."/>
            <person name="Brandt P."/>
            <person name="Grivell L.A."/>
            <person name="Rieger M."/>
            <person name="Weichselgartner M."/>
            <person name="de Simone V."/>
            <person name="Obermaier B."/>
            <person name="Mache R."/>
            <person name="Mueller M."/>
            <person name="Kreis M."/>
            <person name="Delseny M."/>
            <person name="Puigdomenech P."/>
            <person name="Watson M."/>
            <person name="Schmidtheini T."/>
            <person name="Reichert B."/>
            <person name="Portetelle D."/>
            <person name="Perez-Alonso M."/>
            <person name="Boutry M."/>
            <person name="Bancroft I."/>
            <person name="Vos P."/>
            <person name="Hoheisel J."/>
            <person name="Zimmermann W."/>
            <person name="Wedler H."/>
            <person name="Ridley P."/>
            <person name="Langham S.-A."/>
            <person name="McCullagh B."/>
            <person name="Bilham L."/>
            <person name="Robben J."/>
            <person name="van der Schueren J."/>
            <person name="Grymonprez B."/>
            <person name="Chuang Y.-J."/>
            <person name="Vandenbussche F."/>
            <person name="Braeken M."/>
            <person name="Weltjens I."/>
            <person name="Voet M."/>
            <person name="Bastiaens I."/>
            <person name="Aert R."/>
            <person name="Defoor E."/>
            <person name="Weitzenegger T."/>
            <person name="Bothe G."/>
            <person name="Ramsperger U."/>
            <person name="Hilbert H."/>
            <person name="Braun M."/>
            <person name="Holzer E."/>
            <person name="Brandt A."/>
            <person name="Peters S."/>
            <person name="van Staveren M."/>
            <person name="Dirkse W."/>
            <person name="Mooijman P."/>
            <person name="Klein Lankhorst R."/>
            <person name="Rose M."/>
            <person name="Hauf J."/>
            <person name="Koetter P."/>
            <person name="Berneiser S."/>
            <person name="Hempel S."/>
            <person name="Feldpausch M."/>
            <person name="Lamberth S."/>
            <person name="Van den Daele H."/>
            <person name="De Keyser A."/>
            <person name="Buysshaert C."/>
            <person name="Gielen J."/>
            <person name="Villarroel R."/>
            <person name="De Clercq R."/>
            <person name="van Montagu M."/>
            <person name="Rogers J."/>
            <person name="Cronin A."/>
            <person name="Quail M.A."/>
            <person name="Bray-Allen S."/>
            <person name="Clark L."/>
            <person name="Doggett J."/>
            <person name="Hall S."/>
            <person name="Kay M."/>
            <person name="Lennard N."/>
            <person name="McLay K."/>
            <person name="Mayes R."/>
            <person name="Pettett A."/>
            <person name="Rajandream M.A."/>
            <person name="Lyne M."/>
            <person name="Benes V."/>
            <person name="Rechmann S."/>
            <person name="Borkova D."/>
            <person name="Bloecker H."/>
            <person name="Scharfe M."/>
            <person name="Grimm M."/>
            <person name="Loehnert T.-H."/>
            <person name="Dose S."/>
            <person name="de Haan M."/>
            <person name="Maarse A.C."/>
            <person name="Schaefer M."/>
            <person name="Mueller-Auer S."/>
            <person name="Gabel C."/>
            <person name="Fuchs M."/>
            <person name="Fartmann B."/>
            <person name="Granderath K."/>
            <person name="Dauner D."/>
            <person name="Herzl A."/>
            <person name="Neumann S."/>
            <person name="Argiriou A."/>
            <person name="Vitale D."/>
            <person name="Liguori R."/>
            <person name="Piravandi E."/>
            <person name="Massenet O."/>
            <person name="Quigley F."/>
            <person name="Clabauld G."/>
            <person name="Muendlein A."/>
            <person name="Felber R."/>
            <person name="Schnabl S."/>
            <person name="Hiller R."/>
            <person name="Schmidt W."/>
            <person name="Lecharny A."/>
            <person name="Aubourg S."/>
            <person name="Chefdor F."/>
            <person name="Cooke R."/>
            <person name="Berger C."/>
            <person name="Monfort A."/>
            <person name="Casacuberta E."/>
            <person name="Gibbons T."/>
            <person name="Weber N."/>
            <person name="Vandenbol M."/>
            <person name="Bargues M."/>
            <person name="Terol J."/>
            <person name="Torres A."/>
            <person name="Perez-Perez A."/>
            <person name="Purnelle B."/>
            <person name="Bent E."/>
            <person name="Johnson S."/>
            <person name="Tacon D."/>
            <person name="Jesse T."/>
            <person name="Heijnen L."/>
            <person name="Schwarz S."/>
            <person name="Scholler P."/>
            <person name="Heber S."/>
            <person name="Francs P."/>
            <person name="Bielke C."/>
            <person name="Frishman D."/>
            <person name="Haase D."/>
            <person name="Lemcke K."/>
            <person name="Mewes H.-W."/>
            <person name="Stocker S."/>
            <person name="Zaccaria P."/>
            <person name="Bevan M."/>
            <person name="Wilson R.K."/>
            <person name="de la Bastide M."/>
            <person name="Habermann K."/>
            <person name="Parnell L."/>
            <person name="Dedhia N."/>
            <person name="Gnoj L."/>
            <person name="Schutz K."/>
            <person name="Huang E."/>
            <person name="Spiegel L."/>
            <person name="Sekhon M."/>
            <person name="Murray J."/>
            <person name="Sheet P."/>
            <person name="Cordes M."/>
            <person name="Abu-Threideh J."/>
            <person name="Stoneking T."/>
            <person name="Kalicki J."/>
            <person name="Graves T."/>
            <person name="Harmon G."/>
            <person name="Edwards J."/>
            <person name="Latreille P."/>
            <person name="Courtney L."/>
            <person name="Cloud J."/>
            <person name="Abbott A."/>
            <person name="Scott K."/>
            <person name="Johnson D."/>
            <person name="Minx P."/>
            <person name="Bentley D."/>
            <person name="Fulton B."/>
            <person name="Miller N."/>
            <person name="Greco T."/>
            <person name="Kemp K."/>
            <person name="Kramer J."/>
            <person name="Fulton L."/>
            <person name="Mardis E."/>
            <person name="Dante M."/>
            <person name="Pepin K."/>
            <person name="Hillier L.W."/>
            <person name="Nelson J."/>
            <person name="Spieth J."/>
            <person name="Ryan E."/>
            <person name="Andrews S."/>
            <person name="Geisel C."/>
            <person name="Layman D."/>
            <person name="Du H."/>
            <person name="Ali J."/>
            <person name="Berghoff A."/>
            <person name="Jones K."/>
            <person name="Drone K."/>
            <person name="Cotton M."/>
            <person name="Joshu C."/>
            <person name="Antonoiu B."/>
            <person name="Zidanic M."/>
            <person name="Strong C."/>
            <person name="Sun H."/>
            <person name="Lamar B."/>
            <person name="Yordan C."/>
            <person name="Ma P."/>
            <person name="Zhong J."/>
            <person name="Preston R."/>
            <person name="Vil D."/>
            <person name="Shekher M."/>
            <person name="Matero A."/>
            <person name="Shah R."/>
            <person name="Swaby I.K."/>
            <person name="O'Shaughnessy A."/>
            <person name="Rodriguez M."/>
            <person name="Hoffman J."/>
            <person name="Till S."/>
            <person name="Granat S."/>
            <person name="Shohdy N."/>
            <person name="Hasegawa A."/>
            <person name="Hameed A."/>
            <person name="Lodhi M."/>
            <person name="Johnson A."/>
            <person name="Chen E."/>
            <person name="Marra M.A."/>
            <person name="Martienssen R."/>
            <person name="McCombie W.R."/>
        </authorList>
    </citation>
    <scope>NUCLEOTIDE SEQUENCE [LARGE SCALE GENOMIC DNA]</scope>
    <source>
        <strain>cv. Columbia</strain>
    </source>
</reference>
<reference key="2">
    <citation type="journal article" date="2017" name="Plant J.">
        <title>Araport11: a complete reannotation of the Arabidopsis thaliana reference genome.</title>
        <authorList>
            <person name="Cheng C.Y."/>
            <person name="Krishnakumar V."/>
            <person name="Chan A.P."/>
            <person name="Thibaud-Nissen F."/>
            <person name="Schobel S."/>
            <person name="Town C.D."/>
        </authorList>
    </citation>
    <scope>GENOME REANNOTATION</scope>
    <source>
        <strain>cv. Columbia</strain>
    </source>
</reference>
<reference key="3">
    <citation type="journal article" date="2003" name="Science">
        <title>Empirical analysis of transcriptional activity in the Arabidopsis genome.</title>
        <authorList>
            <person name="Yamada K."/>
            <person name="Lim J."/>
            <person name="Dale J.M."/>
            <person name="Chen H."/>
            <person name="Shinn P."/>
            <person name="Palm C.J."/>
            <person name="Southwick A.M."/>
            <person name="Wu H.C."/>
            <person name="Kim C.J."/>
            <person name="Nguyen M."/>
            <person name="Pham P.K."/>
            <person name="Cheuk R.F."/>
            <person name="Karlin-Newmann G."/>
            <person name="Liu S.X."/>
            <person name="Lam B."/>
            <person name="Sakano H."/>
            <person name="Wu T."/>
            <person name="Yu G."/>
            <person name="Miranda M."/>
            <person name="Quach H.L."/>
            <person name="Tripp M."/>
            <person name="Chang C.H."/>
            <person name="Lee J.M."/>
            <person name="Toriumi M.J."/>
            <person name="Chan M.M."/>
            <person name="Tang C.C."/>
            <person name="Onodera C.S."/>
            <person name="Deng J.M."/>
            <person name="Akiyama K."/>
            <person name="Ansari Y."/>
            <person name="Arakawa T."/>
            <person name="Banh J."/>
            <person name="Banno F."/>
            <person name="Bowser L."/>
            <person name="Brooks S.Y."/>
            <person name="Carninci P."/>
            <person name="Chao Q."/>
            <person name="Choy N."/>
            <person name="Enju A."/>
            <person name="Goldsmith A.D."/>
            <person name="Gurjal M."/>
            <person name="Hansen N.F."/>
            <person name="Hayashizaki Y."/>
            <person name="Johnson-Hopson C."/>
            <person name="Hsuan V.W."/>
            <person name="Iida K."/>
            <person name="Karnes M."/>
            <person name="Khan S."/>
            <person name="Koesema E."/>
            <person name="Ishida J."/>
            <person name="Jiang P.X."/>
            <person name="Jones T."/>
            <person name="Kawai J."/>
            <person name="Kamiya A."/>
            <person name="Meyers C."/>
            <person name="Nakajima M."/>
            <person name="Narusaka M."/>
            <person name="Seki M."/>
            <person name="Sakurai T."/>
            <person name="Satou M."/>
            <person name="Tamse R."/>
            <person name="Vaysberg M."/>
            <person name="Wallender E.K."/>
            <person name="Wong C."/>
            <person name="Yamamura Y."/>
            <person name="Yuan S."/>
            <person name="Shinozaki K."/>
            <person name="Davis R.W."/>
            <person name="Theologis A."/>
            <person name="Ecker J.R."/>
        </authorList>
    </citation>
    <scope>NUCLEOTIDE SEQUENCE [LARGE SCALE MRNA]</scope>
    <source>
        <strain>cv. Columbia</strain>
    </source>
</reference>
<reference key="4">
    <citation type="submission" date="2006-07" db="EMBL/GenBank/DDBJ databases">
        <title>Large-scale analysis of RIKEN Arabidopsis full-length (RAFL) cDNAs.</title>
        <authorList>
            <person name="Totoki Y."/>
            <person name="Seki M."/>
            <person name="Ishida J."/>
            <person name="Nakajima M."/>
            <person name="Enju A."/>
            <person name="Kamiya A."/>
            <person name="Narusaka M."/>
            <person name="Shin-i T."/>
            <person name="Nakagawa M."/>
            <person name="Sakamoto N."/>
            <person name="Oishi K."/>
            <person name="Kohara Y."/>
            <person name="Kobayashi M."/>
            <person name="Toyoda A."/>
            <person name="Sakaki Y."/>
            <person name="Sakurai T."/>
            <person name="Iida K."/>
            <person name="Akiyama K."/>
            <person name="Satou M."/>
            <person name="Toyoda T."/>
            <person name="Konagaya A."/>
            <person name="Carninci P."/>
            <person name="Kawai J."/>
            <person name="Hayashizaki Y."/>
            <person name="Shinozaki K."/>
        </authorList>
    </citation>
    <scope>NUCLEOTIDE SEQUENCE [LARGE SCALE MRNA]</scope>
    <source>
        <strain>cv. Columbia</strain>
    </source>
</reference>
<reference key="5">
    <citation type="journal article" date="2007" name="Plant J.">
        <title>The role of methionine recycling for ethylene synthesis in Arabidopsis.</title>
        <authorList>
            <person name="Buerstenbinder K."/>
            <person name="Rzewuski G."/>
            <person name="Wirtz M."/>
            <person name="Hell R."/>
            <person name="Sauter M."/>
        </authorList>
    </citation>
    <scope>FUNCTION</scope>
</reference>
<reference key="6">
    <citation type="journal article" date="2008" name="J. Mol. Biol.">
        <title>Molecular determinants of substrate specificity in plant 5'-methylthioadenosine nucleosidases.</title>
        <authorList>
            <person name="Siu K.K."/>
            <person name="Lee J.E."/>
            <person name="Sufrin J.R."/>
            <person name="Moffatt B.A."/>
            <person name="McMillan M."/>
            <person name="Cornell K.A."/>
            <person name="Isom C."/>
            <person name="Howell P.L."/>
        </authorList>
    </citation>
    <scope>FUNCTION</scope>
    <scope>CATALYTIC ACTIVITY</scope>
    <scope>BIOPHYSICOCHEMICAL PROPERTIES</scope>
    <scope>SUBSTRATE SPECIFICITY</scope>
</reference>
<reference key="7">
    <citation type="journal article" date="2011" name="J. Struct. Biol.">
        <title>Mechanism of substrate specificity in 5'-methylthioadenosine/S-adenosylhomocysteine nucleosidases.</title>
        <authorList>
            <person name="Siu K.K."/>
            <person name="Asmus K."/>
            <person name="Zhang A.N."/>
            <person name="Horvatin C."/>
            <person name="Li S."/>
            <person name="Liu T."/>
            <person name="Moffatt B."/>
            <person name="Woods V.L. Jr."/>
            <person name="Howell P.L."/>
        </authorList>
    </citation>
    <scope>FUNCTION</scope>
</reference>
<reference key="8">
    <citation type="journal article" date="2010" name="Plant J.">
        <title>Inhibition of 5'-methylthioadenosine metabolism in the Yang cycle alters polyamine levels, and impairs seedling growth and reproduction in Arabidopsis.</title>
        <authorList>
            <person name="Buerstenbinder K."/>
            <person name="Waduwara I."/>
            <person name="Schoor S."/>
            <person name="Moffatt B.A."/>
            <person name="Wirtz M."/>
            <person name="Minocha S.C."/>
            <person name="Oppermann Y."/>
            <person name="Bouchereau A."/>
            <person name="Hell R."/>
            <person name="Sauter M."/>
        </authorList>
    </citation>
    <scope>FUNCTION</scope>
    <scope>DISRUPTION PHENOTYPE</scope>
</reference>
<reference key="9">
    <citation type="journal article" date="2012" name="Mol. Cell. Proteomics">
        <title>Comparative large-scale characterisation of plant vs. mammal proteins reveals similar and idiosyncratic N-alpha acetylation features.</title>
        <authorList>
            <person name="Bienvenut W.V."/>
            <person name="Sumpton D."/>
            <person name="Martinez A."/>
            <person name="Lilla S."/>
            <person name="Espagne C."/>
            <person name="Meinnel T."/>
            <person name="Giglione C."/>
        </authorList>
    </citation>
    <scope>ACETYLATION [LARGE SCALE ANALYSIS] AT MET-1</scope>
    <scope>IDENTIFICATION BY MASS SPECTROMETRY [LARGE SCALE ANALYSIS]</scope>
</reference>
<reference evidence="11" key="10">
    <citation type="journal article" date="2009" name="Biochem. Biophys. Res. Commun.">
        <title>Biochemical and structural characterization of 5'-methylthioadenosine nucleosidases from Arabidopsis thaliana.</title>
        <authorList>
            <person name="Park E.Y."/>
            <person name="Choi W.S."/>
            <person name="Oh S.I."/>
            <person name="Kim K.N."/>
            <person name="Shin J.S."/>
            <person name="Song H.K."/>
        </authorList>
    </citation>
    <scope>X-RAY CRYSTALLOGRAPHY (2.9 ANGSTROMS) IN COMPLEX WITH ADENINE</scope>
    <scope>FUNCTION</scope>
    <scope>CATALYTIC ACTIVITY</scope>
    <scope>BIOPHYSICOCHEMICAL PROPERTIES</scope>
    <scope>SUBSTRATE SPECIFICITY</scope>
    <scope>SUBUNIT</scope>
</reference>